<dbReference type="EMBL" id="CP001215">
    <property type="protein sequence ID" value="ACP13074.1"/>
    <property type="molecule type" value="Genomic_DNA"/>
</dbReference>
<dbReference type="RefSeq" id="WP_001143076.1">
    <property type="nucleotide sequence ID" value="NC_012581.1"/>
</dbReference>
<dbReference type="SMR" id="C3LKN2"/>
<dbReference type="GeneID" id="75087347"/>
<dbReference type="KEGG" id="bah:BAMEG_4462"/>
<dbReference type="HOGENOM" id="CLU_069532_3_0_9"/>
<dbReference type="GO" id="GO:0005737">
    <property type="term" value="C:cytoplasm"/>
    <property type="evidence" value="ECO:0007669"/>
    <property type="project" value="UniProtKB-SubCell"/>
</dbReference>
<dbReference type="GO" id="GO:0003677">
    <property type="term" value="F:DNA binding"/>
    <property type="evidence" value="ECO:0007669"/>
    <property type="project" value="UniProtKB-KW"/>
</dbReference>
<dbReference type="GO" id="GO:0003700">
    <property type="term" value="F:DNA-binding transcription factor activity"/>
    <property type="evidence" value="ECO:0007669"/>
    <property type="project" value="UniProtKB-UniRule"/>
</dbReference>
<dbReference type="GO" id="GO:0030145">
    <property type="term" value="F:manganese ion binding"/>
    <property type="evidence" value="ECO:0007669"/>
    <property type="project" value="UniProtKB-UniRule"/>
</dbReference>
<dbReference type="GO" id="GO:0046983">
    <property type="term" value="F:protein dimerization activity"/>
    <property type="evidence" value="ECO:0007669"/>
    <property type="project" value="InterPro"/>
</dbReference>
<dbReference type="GO" id="GO:0030026">
    <property type="term" value="P:intracellular manganese ion homeostasis"/>
    <property type="evidence" value="ECO:0007669"/>
    <property type="project" value="UniProtKB-UniRule"/>
</dbReference>
<dbReference type="FunFam" id="1.10.10.10:FF:000189">
    <property type="entry name" value="HTH-type transcriptional regulator MntR"/>
    <property type="match status" value="1"/>
</dbReference>
<dbReference type="FunFam" id="1.10.60.10:FF:000003">
    <property type="entry name" value="HTH-type transcriptional regulator MntR"/>
    <property type="match status" value="1"/>
</dbReference>
<dbReference type="Gene3D" id="1.10.60.10">
    <property type="entry name" value="Iron dependent repressor, metal binding and dimerisation domain"/>
    <property type="match status" value="1"/>
</dbReference>
<dbReference type="Gene3D" id="1.10.10.10">
    <property type="entry name" value="Winged helix-like DNA-binding domain superfamily/Winged helix DNA-binding domain"/>
    <property type="match status" value="1"/>
</dbReference>
<dbReference type="HAMAP" id="MF_00732">
    <property type="entry name" value="HTH_MntR"/>
    <property type="match status" value="1"/>
</dbReference>
<dbReference type="InterPro" id="IPR050536">
    <property type="entry name" value="DtxR_MntR_Metal-Reg"/>
</dbReference>
<dbReference type="InterPro" id="IPR001367">
    <property type="entry name" value="Fe_dep_repressor"/>
</dbReference>
<dbReference type="InterPro" id="IPR036421">
    <property type="entry name" value="Fe_dep_repressor_sf"/>
</dbReference>
<dbReference type="InterPro" id="IPR022687">
    <property type="entry name" value="HTH_DTXR"/>
</dbReference>
<dbReference type="InterPro" id="IPR022897">
    <property type="entry name" value="HTH_tscrpt_reg_MntR"/>
</dbReference>
<dbReference type="InterPro" id="IPR022689">
    <property type="entry name" value="Iron_dep_repressor"/>
</dbReference>
<dbReference type="InterPro" id="IPR036388">
    <property type="entry name" value="WH-like_DNA-bd_sf"/>
</dbReference>
<dbReference type="InterPro" id="IPR036390">
    <property type="entry name" value="WH_DNA-bd_sf"/>
</dbReference>
<dbReference type="NCBIfam" id="NF003025">
    <property type="entry name" value="PRK03902.1"/>
    <property type="match status" value="1"/>
</dbReference>
<dbReference type="PANTHER" id="PTHR33238">
    <property type="entry name" value="IRON (METAL) DEPENDENT REPRESSOR, DTXR FAMILY"/>
    <property type="match status" value="1"/>
</dbReference>
<dbReference type="PANTHER" id="PTHR33238:SF11">
    <property type="entry name" value="TRANSCRIPTIONAL REGULATOR MNTR"/>
    <property type="match status" value="1"/>
</dbReference>
<dbReference type="Pfam" id="PF02742">
    <property type="entry name" value="Fe_dep_repr_C"/>
    <property type="match status" value="1"/>
</dbReference>
<dbReference type="Pfam" id="PF01325">
    <property type="entry name" value="Fe_dep_repress"/>
    <property type="match status" value="1"/>
</dbReference>
<dbReference type="SMART" id="SM00529">
    <property type="entry name" value="HTH_DTXR"/>
    <property type="match status" value="1"/>
</dbReference>
<dbReference type="SUPFAM" id="SSF47979">
    <property type="entry name" value="Iron-dependent repressor protein, dimerization domain"/>
    <property type="match status" value="1"/>
</dbReference>
<dbReference type="SUPFAM" id="SSF46785">
    <property type="entry name" value="Winged helix' DNA-binding domain"/>
    <property type="match status" value="1"/>
</dbReference>
<dbReference type="PROSITE" id="PS50944">
    <property type="entry name" value="HTH_DTXR"/>
    <property type="match status" value="1"/>
</dbReference>
<sequence length="142" mass="16596">MPTPSMEDYIEQIYLLIDEKGYARVSDIAEALSVHPSSVTKMVQKLDKDEYLIYEKYRGLVLTSKGKKIGERLVYRHELLEQFMRIIGVDESKIYNDVEGIEHHLSWEAIDRIGDLVQYFEQDEVRVETLRGVQKANEEKSN</sequence>
<keyword id="KW-0010">Activator</keyword>
<keyword id="KW-0963">Cytoplasm</keyword>
<keyword id="KW-0238">DNA-binding</keyword>
<keyword id="KW-0464">Manganese</keyword>
<keyword id="KW-0479">Metal-binding</keyword>
<keyword id="KW-0678">Repressor</keyword>
<keyword id="KW-0804">Transcription</keyword>
<keyword id="KW-0805">Transcription regulation</keyword>
<organism>
    <name type="scientific">Bacillus anthracis (strain CDC 684 / NRRL 3495)</name>
    <dbReference type="NCBI Taxonomy" id="568206"/>
    <lineage>
        <taxon>Bacteria</taxon>
        <taxon>Bacillati</taxon>
        <taxon>Bacillota</taxon>
        <taxon>Bacilli</taxon>
        <taxon>Bacillales</taxon>
        <taxon>Bacillaceae</taxon>
        <taxon>Bacillus</taxon>
        <taxon>Bacillus cereus group</taxon>
    </lineage>
</organism>
<gene>
    <name evidence="1" type="primary">mntR</name>
    <name type="ordered locus">BAMEG_4462</name>
</gene>
<accession>C3LKN2</accession>
<feature type="chain" id="PRO_1000190478" description="HTH-type transcriptional regulator MntR">
    <location>
        <begin position="1"/>
        <end position="142"/>
    </location>
</feature>
<feature type="domain" description="HTH dtxR-type" evidence="1">
    <location>
        <begin position="1"/>
        <end position="63"/>
    </location>
</feature>
<feature type="binding site" evidence="1">
    <location>
        <position position="8"/>
    </location>
    <ligand>
        <name>Mn(2+)</name>
        <dbReference type="ChEBI" id="CHEBI:29035"/>
        <label>1</label>
    </ligand>
</feature>
<feature type="binding site" evidence="1">
    <location>
        <position position="11"/>
    </location>
    <ligand>
        <name>Mn(2+)</name>
        <dbReference type="ChEBI" id="CHEBI:29035"/>
        <label>2</label>
    </ligand>
</feature>
<feature type="binding site" evidence="1">
    <location>
        <position position="77"/>
    </location>
    <ligand>
        <name>Mn(2+)</name>
        <dbReference type="ChEBI" id="CHEBI:29035"/>
        <label>2</label>
    </ligand>
</feature>
<feature type="binding site" evidence="1">
    <location>
        <position position="99"/>
    </location>
    <ligand>
        <name>Mn(2+)</name>
        <dbReference type="ChEBI" id="CHEBI:29035"/>
        <label>1</label>
    </ligand>
</feature>
<feature type="binding site" evidence="1">
    <location>
        <position position="99"/>
    </location>
    <ligand>
        <name>Mn(2+)</name>
        <dbReference type="ChEBI" id="CHEBI:29035"/>
        <label>2</label>
    </ligand>
</feature>
<feature type="binding site" evidence="1">
    <location>
        <position position="102"/>
    </location>
    <ligand>
        <name>Mn(2+)</name>
        <dbReference type="ChEBI" id="CHEBI:29035"/>
        <label>1</label>
    </ligand>
</feature>
<feature type="binding site" evidence="1">
    <location>
        <position position="102"/>
    </location>
    <ligand>
        <name>Mn(2+)</name>
        <dbReference type="ChEBI" id="CHEBI:29035"/>
        <label>2</label>
    </ligand>
</feature>
<feature type="binding site" evidence="1">
    <location>
        <position position="103"/>
    </location>
    <ligand>
        <name>Mn(2+)</name>
        <dbReference type="ChEBI" id="CHEBI:29035"/>
        <label>1</label>
    </ligand>
</feature>
<comment type="function">
    <text evidence="1">Central regulator of manganese homeostasis.</text>
</comment>
<comment type="activity regulation">
    <text evidence="1">DNA binding is strongly activated by Mn(2+).</text>
</comment>
<comment type="subunit">
    <text evidence="1">Homodimer.</text>
</comment>
<comment type="subcellular location">
    <subcellularLocation>
        <location evidence="1">Cytoplasm</location>
    </subcellularLocation>
</comment>
<comment type="similarity">
    <text evidence="1">Belongs to the DtxR/MntR family.</text>
</comment>
<protein>
    <recommendedName>
        <fullName evidence="1">HTH-type transcriptional regulator MntR</fullName>
    </recommendedName>
    <alternativeName>
        <fullName evidence="1">Manganese transport regulator</fullName>
    </alternativeName>
</protein>
<name>MNTR_BACAC</name>
<proteinExistence type="inferred from homology"/>
<reference key="1">
    <citation type="submission" date="2008-10" db="EMBL/GenBank/DDBJ databases">
        <title>Genome sequence of Bacillus anthracis str. CDC 684.</title>
        <authorList>
            <person name="Dodson R.J."/>
            <person name="Munk A.C."/>
            <person name="Brettin T."/>
            <person name="Bruce D."/>
            <person name="Detter C."/>
            <person name="Tapia R."/>
            <person name="Han C."/>
            <person name="Sutton G."/>
            <person name="Sims D."/>
        </authorList>
    </citation>
    <scope>NUCLEOTIDE SEQUENCE [LARGE SCALE GENOMIC DNA]</scope>
    <source>
        <strain>CDC 684 / NRRL 3495</strain>
    </source>
</reference>
<evidence type="ECO:0000255" key="1">
    <source>
        <dbReference type="HAMAP-Rule" id="MF_00732"/>
    </source>
</evidence>